<feature type="chain" id="PRO_0000087823" description="NADH-dependent butanol dehydrogenase B">
    <location>
        <begin position="1"/>
        <end position="390"/>
    </location>
</feature>
<gene>
    <name type="primary">bdhB</name>
    <name type="ordered locus">CA_C3298</name>
</gene>
<organism>
    <name type="scientific">Clostridium acetobutylicum (strain ATCC 824 / DSM 792 / JCM 1419 / IAM 19013 / LMG 5710 / NBRC 13948 / NRRL B-527 / VKM B-1787 / 2291 / W)</name>
    <dbReference type="NCBI Taxonomy" id="272562"/>
    <lineage>
        <taxon>Bacteria</taxon>
        <taxon>Bacillati</taxon>
        <taxon>Bacillota</taxon>
        <taxon>Clostridia</taxon>
        <taxon>Eubacteriales</taxon>
        <taxon>Clostridiaceae</taxon>
        <taxon>Clostridium</taxon>
    </lineage>
</organism>
<reference key="1">
    <citation type="journal article" date="1992" name="J. Bacteriol.">
        <title>Molecular characterization of two Clostridium acetobutylicum ATCC 824 butanol dehydrogenase isozyme genes.</title>
        <authorList>
            <person name="Walter K.A."/>
            <person name="Bennett G.N."/>
            <person name="Papoutsakis E.T."/>
        </authorList>
    </citation>
    <scope>NUCLEOTIDE SEQUENCE [GENOMIC DNA]</scope>
    <source>
        <strain>ATCC 824 / DSM 792 / JCM 1419 / IAM 19013 / LMG 5710 / NBRC 13948 / NRRL B-527 / VKM B-1787 / 2291 / W</strain>
    </source>
</reference>
<reference key="2">
    <citation type="journal article" date="2001" name="J. Bacteriol.">
        <title>Genome sequence and comparative analysis of the solvent-producing bacterium Clostridium acetobutylicum.</title>
        <authorList>
            <person name="Noelling J."/>
            <person name="Breton G."/>
            <person name="Omelchenko M.V."/>
            <person name="Makarova K.S."/>
            <person name="Zeng Q."/>
            <person name="Gibson R."/>
            <person name="Lee H.M."/>
            <person name="Dubois J."/>
            <person name="Qiu D."/>
            <person name="Hitti J."/>
            <person name="Wolf Y.I."/>
            <person name="Tatusov R.L."/>
            <person name="Sabathe F."/>
            <person name="Doucette-Stamm L.A."/>
            <person name="Soucaille P."/>
            <person name="Daly M.J."/>
            <person name="Bennett G.N."/>
            <person name="Koonin E.V."/>
            <person name="Smith D.R."/>
        </authorList>
    </citation>
    <scope>NUCLEOTIDE SEQUENCE [LARGE SCALE GENOMIC DNA]</scope>
    <source>
        <strain>ATCC 824 / DSM 792 / JCM 1419 / IAM 19013 / LMG 5710 / NBRC 13948 / NRRL B-527 / VKM B-1787 / 2291 / W</strain>
    </source>
</reference>
<reference key="3">
    <citation type="journal article" date="1991" name="Ann. N. Y. Acad. Sci.">
        <title>Cloning of an NADH-dependent butanol dehydrogenase gene from Clostridium acetobutylicum.</title>
        <authorList>
            <person name="Petersen D.J."/>
            <person name="Welch R.W."/>
            <person name="Walter K.A."/>
            <person name="Mermelstein L.D."/>
            <person name="Papoutsakis E.T."/>
            <person name="Rudolph F.B."/>
            <person name="Bennett G.N."/>
        </authorList>
    </citation>
    <scope>PROTEIN SEQUENCE OF N-TERMINUS</scope>
</reference>
<proteinExistence type="evidence at protein level"/>
<name>ADHB_CLOAB</name>
<comment type="pathway">
    <text>Alcohol metabolism; butanol biosynthesis.</text>
</comment>
<comment type="subunit">
    <text>Homodimer.</text>
</comment>
<comment type="miscellaneous">
    <text>Primarily NADH-dependent, although some NADPH-dependent activity was observed.</text>
</comment>
<comment type="similarity">
    <text evidence="1">Belongs to the iron-containing alcohol dehydrogenase family.</text>
</comment>
<protein>
    <recommendedName>
        <fullName>NADH-dependent butanol dehydrogenase B</fullName>
        <ecNumber>1.1.1.-</ecNumber>
    </recommendedName>
    <alternativeName>
        <fullName>BDH II</fullName>
    </alternativeName>
</protein>
<keyword id="KW-0903">Direct protein sequencing</keyword>
<keyword id="KW-0520">NAD</keyword>
<keyword id="KW-0560">Oxidoreductase</keyword>
<keyword id="KW-1185">Reference proteome</keyword>
<evidence type="ECO:0000305" key="1"/>
<accession>Q04945</accession>
<dbReference type="EC" id="1.1.1.-"/>
<dbReference type="EMBL" id="M96946">
    <property type="protein sequence ID" value="AAA23207.1"/>
    <property type="molecule type" value="Genomic_DNA"/>
</dbReference>
<dbReference type="EMBL" id="AE001437">
    <property type="protein sequence ID" value="AAK81231.1"/>
    <property type="molecule type" value="Genomic_DNA"/>
</dbReference>
<dbReference type="PIR" id="B47013">
    <property type="entry name" value="B47013"/>
</dbReference>
<dbReference type="PIR" id="D97305">
    <property type="entry name" value="D97305"/>
</dbReference>
<dbReference type="RefSeq" id="NP_349891.1">
    <property type="nucleotide sequence ID" value="NC_003030.1"/>
</dbReference>
<dbReference type="RefSeq" id="WP_010966571.1">
    <property type="nucleotide sequence ID" value="NC_003030.1"/>
</dbReference>
<dbReference type="SMR" id="Q04945"/>
<dbReference type="STRING" id="272562.CA_C3298"/>
<dbReference type="GeneID" id="44999792"/>
<dbReference type="KEGG" id="cac:CA_C3298"/>
<dbReference type="PATRIC" id="fig|272562.8.peg.3476"/>
<dbReference type="eggNOG" id="COG1979">
    <property type="taxonomic scope" value="Bacteria"/>
</dbReference>
<dbReference type="HOGENOM" id="CLU_007207_0_4_9"/>
<dbReference type="OrthoDB" id="9801156at2"/>
<dbReference type="BioCyc" id="MetaCyc:BDHBCLOS-MONOMER"/>
<dbReference type="UniPathway" id="UPA00743"/>
<dbReference type="Proteomes" id="UP000000814">
    <property type="component" value="Chromosome"/>
</dbReference>
<dbReference type="GO" id="GO:0005829">
    <property type="term" value="C:cytosol"/>
    <property type="evidence" value="ECO:0007669"/>
    <property type="project" value="TreeGrafter"/>
</dbReference>
<dbReference type="GO" id="GO:0008106">
    <property type="term" value="F:alcohol dehydrogenase (NADP+) activity"/>
    <property type="evidence" value="ECO:0007669"/>
    <property type="project" value="TreeGrafter"/>
</dbReference>
<dbReference type="GO" id="GO:1990362">
    <property type="term" value="F:butanol dehydrogenase (NAD+) activity"/>
    <property type="evidence" value="ECO:0007669"/>
    <property type="project" value="InterPro"/>
</dbReference>
<dbReference type="GO" id="GO:0046872">
    <property type="term" value="F:metal ion binding"/>
    <property type="evidence" value="ECO:0007669"/>
    <property type="project" value="InterPro"/>
</dbReference>
<dbReference type="GO" id="GO:1990002">
    <property type="term" value="F:methylglyoxal reductase (NADPH) (acetol producing) activity"/>
    <property type="evidence" value="ECO:0007669"/>
    <property type="project" value="TreeGrafter"/>
</dbReference>
<dbReference type="GO" id="GO:0071271">
    <property type="term" value="P:1-butanol biosynthetic process"/>
    <property type="evidence" value="ECO:0007669"/>
    <property type="project" value="UniProtKB-UniPathway"/>
</dbReference>
<dbReference type="CDD" id="cd08187">
    <property type="entry name" value="BDH"/>
    <property type="match status" value="1"/>
</dbReference>
<dbReference type="FunFam" id="3.40.50.1970:FF:000003">
    <property type="entry name" value="Alcohol dehydrogenase, iron-containing"/>
    <property type="match status" value="1"/>
</dbReference>
<dbReference type="Gene3D" id="3.40.50.1970">
    <property type="match status" value="1"/>
</dbReference>
<dbReference type="Gene3D" id="1.20.1090.10">
    <property type="entry name" value="Dehydroquinate synthase-like - alpha domain"/>
    <property type="match status" value="1"/>
</dbReference>
<dbReference type="InterPro" id="IPR001670">
    <property type="entry name" value="ADH_Fe/GldA"/>
</dbReference>
<dbReference type="InterPro" id="IPR056798">
    <property type="entry name" value="ADH_Fe_C"/>
</dbReference>
<dbReference type="InterPro" id="IPR018211">
    <property type="entry name" value="ADH_Fe_CS"/>
</dbReference>
<dbReference type="InterPro" id="IPR044731">
    <property type="entry name" value="BDH-like"/>
</dbReference>
<dbReference type="PANTHER" id="PTHR43633">
    <property type="entry name" value="ALCOHOL DEHYDROGENASE YQHD"/>
    <property type="match status" value="1"/>
</dbReference>
<dbReference type="PANTHER" id="PTHR43633:SF1">
    <property type="entry name" value="ALCOHOL DEHYDROGENASE YQHD"/>
    <property type="match status" value="1"/>
</dbReference>
<dbReference type="Pfam" id="PF25137">
    <property type="entry name" value="ADH_Fe_C"/>
    <property type="match status" value="1"/>
</dbReference>
<dbReference type="Pfam" id="PF00465">
    <property type="entry name" value="Fe-ADH"/>
    <property type="match status" value="1"/>
</dbReference>
<dbReference type="SUPFAM" id="SSF56796">
    <property type="entry name" value="Dehydroquinate synthase-like"/>
    <property type="match status" value="1"/>
</dbReference>
<dbReference type="PROSITE" id="PS00913">
    <property type="entry name" value="ADH_IRON_1"/>
    <property type="match status" value="1"/>
</dbReference>
<dbReference type="PROSITE" id="PS00060">
    <property type="entry name" value="ADH_IRON_2"/>
    <property type="match status" value="1"/>
</dbReference>
<dbReference type="PROSITE" id="PS00455">
    <property type="entry name" value="AMP_BINDING"/>
    <property type="match status" value="1"/>
</dbReference>
<sequence length="390" mass="43287">MVDFEYSIPTRIFFGKDKINVLGRELKKYGSKVLIVYGGGSIKRNGIYDKAVSILEKNSIKFYELAGVEPNPRVTTVEKGVKICRENGVEVVLAIGGGSAIDCAKVIAAACEYDGNPWDIVLDGSKIKRVLPIASILTIAATGSEMDTWAVINNMDTNEKLIAAHPDMAPKFSILDPTYTYTVPTNQTAAGTADIMSHIFEVYFSNTKTAYLQDRMAEALLRTCIKYGGIALEKPDDYEARANLMWASSLAINGLLTYGKDTNWSVHLMEHELSAYYDITHGVGLAILTPNWMEYILNNDTVYKFVEYGVNVWGIDKEKNHYDIAHQAIQKTRDYFVNVLGLPSRLRDVGIEEEKLDIMAKESVKLTGGTIGNLRPVNASEVLQIFKKSV</sequence>